<protein>
    <recommendedName>
        <fullName evidence="1">Chorismate synthase</fullName>
        <shortName evidence="1">CS</shortName>
        <ecNumber evidence="1">4.2.3.5</ecNumber>
    </recommendedName>
    <alternativeName>
        <fullName evidence="1">5-enolpyruvylshikimate-3-phosphate phospholyase</fullName>
    </alternativeName>
</protein>
<organism>
    <name type="scientific">Shewanella baltica (strain OS185)</name>
    <dbReference type="NCBI Taxonomy" id="402882"/>
    <lineage>
        <taxon>Bacteria</taxon>
        <taxon>Pseudomonadati</taxon>
        <taxon>Pseudomonadota</taxon>
        <taxon>Gammaproteobacteria</taxon>
        <taxon>Alteromonadales</taxon>
        <taxon>Shewanellaceae</taxon>
        <taxon>Shewanella</taxon>
    </lineage>
</organism>
<dbReference type="EC" id="4.2.3.5" evidence="1"/>
<dbReference type="EMBL" id="CP000753">
    <property type="protein sequence ID" value="ABS08903.1"/>
    <property type="molecule type" value="Genomic_DNA"/>
</dbReference>
<dbReference type="RefSeq" id="WP_006082233.1">
    <property type="nucleotide sequence ID" value="NC_009665.1"/>
</dbReference>
<dbReference type="SMR" id="A6WQ14"/>
<dbReference type="GeneID" id="11772932"/>
<dbReference type="KEGG" id="sbm:Shew185_2769"/>
<dbReference type="HOGENOM" id="CLU_034547_0_2_6"/>
<dbReference type="UniPathway" id="UPA00053">
    <property type="reaction ID" value="UER00090"/>
</dbReference>
<dbReference type="GO" id="GO:0005829">
    <property type="term" value="C:cytosol"/>
    <property type="evidence" value="ECO:0007669"/>
    <property type="project" value="TreeGrafter"/>
</dbReference>
<dbReference type="GO" id="GO:0004107">
    <property type="term" value="F:chorismate synthase activity"/>
    <property type="evidence" value="ECO:0007669"/>
    <property type="project" value="UniProtKB-UniRule"/>
</dbReference>
<dbReference type="GO" id="GO:0010181">
    <property type="term" value="F:FMN binding"/>
    <property type="evidence" value="ECO:0007669"/>
    <property type="project" value="TreeGrafter"/>
</dbReference>
<dbReference type="GO" id="GO:0008652">
    <property type="term" value="P:amino acid biosynthetic process"/>
    <property type="evidence" value="ECO:0007669"/>
    <property type="project" value="UniProtKB-KW"/>
</dbReference>
<dbReference type="GO" id="GO:0009073">
    <property type="term" value="P:aromatic amino acid family biosynthetic process"/>
    <property type="evidence" value="ECO:0007669"/>
    <property type="project" value="UniProtKB-KW"/>
</dbReference>
<dbReference type="GO" id="GO:0009423">
    <property type="term" value="P:chorismate biosynthetic process"/>
    <property type="evidence" value="ECO:0007669"/>
    <property type="project" value="UniProtKB-UniRule"/>
</dbReference>
<dbReference type="CDD" id="cd07304">
    <property type="entry name" value="Chorismate_synthase"/>
    <property type="match status" value="1"/>
</dbReference>
<dbReference type="FunFam" id="3.60.150.10:FF:000001">
    <property type="entry name" value="Chorismate synthase"/>
    <property type="match status" value="1"/>
</dbReference>
<dbReference type="Gene3D" id="3.60.150.10">
    <property type="entry name" value="Chorismate synthase AroC"/>
    <property type="match status" value="1"/>
</dbReference>
<dbReference type="HAMAP" id="MF_00300">
    <property type="entry name" value="Chorismate_synth"/>
    <property type="match status" value="1"/>
</dbReference>
<dbReference type="InterPro" id="IPR000453">
    <property type="entry name" value="Chorismate_synth"/>
</dbReference>
<dbReference type="InterPro" id="IPR035904">
    <property type="entry name" value="Chorismate_synth_AroC_sf"/>
</dbReference>
<dbReference type="InterPro" id="IPR020541">
    <property type="entry name" value="Chorismate_synthase_CS"/>
</dbReference>
<dbReference type="NCBIfam" id="TIGR00033">
    <property type="entry name" value="aroC"/>
    <property type="match status" value="1"/>
</dbReference>
<dbReference type="NCBIfam" id="NF003793">
    <property type="entry name" value="PRK05382.1"/>
    <property type="match status" value="1"/>
</dbReference>
<dbReference type="PANTHER" id="PTHR21085">
    <property type="entry name" value="CHORISMATE SYNTHASE"/>
    <property type="match status" value="1"/>
</dbReference>
<dbReference type="PANTHER" id="PTHR21085:SF0">
    <property type="entry name" value="CHORISMATE SYNTHASE"/>
    <property type="match status" value="1"/>
</dbReference>
<dbReference type="Pfam" id="PF01264">
    <property type="entry name" value="Chorismate_synt"/>
    <property type="match status" value="1"/>
</dbReference>
<dbReference type="PIRSF" id="PIRSF001456">
    <property type="entry name" value="Chorismate_synth"/>
    <property type="match status" value="1"/>
</dbReference>
<dbReference type="SUPFAM" id="SSF103263">
    <property type="entry name" value="Chorismate synthase, AroC"/>
    <property type="match status" value="1"/>
</dbReference>
<dbReference type="PROSITE" id="PS00787">
    <property type="entry name" value="CHORISMATE_SYNTHASE_1"/>
    <property type="match status" value="1"/>
</dbReference>
<dbReference type="PROSITE" id="PS00788">
    <property type="entry name" value="CHORISMATE_SYNTHASE_2"/>
    <property type="match status" value="1"/>
</dbReference>
<dbReference type="PROSITE" id="PS00789">
    <property type="entry name" value="CHORISMATE_SYNTHASE_3"/>
    <property type="match status" value="1"/>
</dbReference>
<comment type="function">
    <text evidence="1">Catalyzes the anti-1,4-elimination of the C-3 phosphate and the C-6 proR hydrogen from 5-enolpyruvylshikimate-3-phosphate (EPSP) to yield chorismate, which is the branch point compound that serves as the starting substrate for the three terminal pathways of aromatic amino acid biosynthesis. This reaction introduces a second double bond into the aromatic ring system.</text>
</comment>
<comment type="catalytic activity">
    <reaction evidence="1">
        <text>5-O-(1-carboxyvinyl)-3-phosphoshikimate = chorismate + phosphate</text>
        <dbReference type="Rhea" id="RHEA:21020"/>
        <dbReference type="ChEBI" id="CHEBI:29748"/>
        <dbReference type="ChEBI" id="CHEBI:43474"/>
        <dbReference type="ChEBI" id="CHEBI:57701"/>
        <dbReference type="EC" id="4.2.3.5"/>
    </reaction>
</comment>
<comment type="cofactor">
    <cofactor evidence="1">
        <name>FMNH2</name>
        <dbReference type="ChEBI" id="CHEBI:57618"/>
    </cofactor>
    <text evidence="1">Reduced FMN (FMNH(2)).</text>
</comment>
<comment type="pathway">
    <text evidence="1">Metabolic intermediate biosynthesis; chorismate biosynthesis; chorismate from D-erythrose 4-phosphate and phosphoenolpyruvate: step 7/7.</text>
</comment>
<comment type="subunit">
    <text evidence="1">Homotetramer.</text>
</comment>
<comment type="similarity">
    <text evidence="1">Belongs to the chorismate synthase family.</text>
</comment>
<feature type="chain" id="PRO_1000022546" description="Chorismate synthase">
    <location>
        <begin position="1"/>
        <end position="364"/>
    </location>
</feature>
<feature type="region of interest" description="Disordered" evidence="2">
    <location>
        <begin position="41"/>
        <end position="60"/>
    </location>
</feature>
<feature type="binding site" evidence="1">
    <location>
        <position position="48"/>
    </location>
    <ligand>
        <name>NADP(+)</name>
        <dbReference type="ChEBI" id="CHEBI:58349"/>
    </ligand>
</feature>
<feature type="binding site" evidence="1">
    <location>
        <position position="54"/>
    </location>
    <ligand>
        <name>NADP(+)</name>
        <dbReference type="ChEBI" id="CHEBI:58349"/>
    </ligand>
</feature>
<feature type="binding site" evidence="1">
    <location>
        <begin position="125"/>
        <end position="127"/>
    </location>
    <ligand>
        <name>FMN</name>
        <dbReference type="ChEBI" id="CHEBI:58210"/>
    </ligand>
</feature>
<feature type="binding site" evidence="1">
    <location>
        <begin position="238"/>
        <end position="239"/>
    </location>
    <ligand>
        <name>FMN</name>
        <dbReference type="ChEBI" id="CHEBI:58210"/>
    </ligand>
</feature>
<feature type="binding site" evidence="1">
    <location>
        <position position="278"/>
    </location>
    <ligand>
        <name>FMN</name>
        <dbReference type="ChEBI" id="CHEBI:58210"/>
    </ligand>
</feature>
<feature type="binding site" evidence="1">
    <location>
        <begin position="293"/>
        <end position="297"/>
    </location>
    <ligand>
        <name>FMN</name>
        <dbReference type="ChEBI" id="CHEBI:58210"/>
    </ligand>
</feature>
<feature type="binding site" evidence="1">
    <location>
        <position position="319"/>
    </location>
    <ligand>
        <name>FMN</name>
        <dbReference type="ChEBI" id="CHEBI:58210"/>
    </ligand>
</feature>
<evidence type="ECO:0000255" key="1">
    <source>
        <dbReference type="HAMAP-Rule" id="MF_00300"/>
    </source>
</evidence>
<evidence type="ECO:0000256" key="2">
    <source>
        <dbReference type="SAM" id="MobiDB-lite"/>
    </source>
</evidence>
<sequence length="364" mass="39111">MSGNSIGQNFVVTTFGESHGVALGCIIDGCPPGLELTEADMQHDLDRRRPGTSRYTTARREPDEVRILSGVFEGKTTGTSIGLLIENTDQRSQDYSNIKDLFRPGHADYTYQQKYGMRDYRGGGRSSARETAMRVAAGAVAKKYLKQVHGIEIYGFMSQLGPICAQTIDLDQIEQNAFFFPDASKLEALDEYMRELKKSGDSIGAKISVIATGVPVGLGEPVFDRLDADIAHALMGINAVKGVEIGDGFGVVTQKGSEGRDLMSPQGFESNHAGGVLGGISSGQPIIAHIALKPTSSISVPGQSMTAQGEMAEVVTKGRHDPCVGIRAVPIAEAMLAIVLMDHLLRHRAQNQDVRSHTPVLGMR</sequence>
<accession>A6WQ14</accession>
<proteinExistence type="inferred from homology"/>
<name>AROC_SHEB8</name>
<gene>
    <name evidence="1" type="primary">aroC</name>
    <name type="ordered locus">Shew185_2769</name>
</gene>
<reference key="1">
    <citation type="submission" date="2007-07" db="EMBL/GenBank/DDBJ databases">
        <title>Complete sequence of chromosome of Shewanella baltica OS185.</title>
        <authorList>
            <consortium name="US DOE Joint Genome Institute"/>
            <person name="Copeland A."/>
            <person name="Lucas S."/>
            <person name="Lapidus A."/>
            <person name="Barry K."/>
            <person name="Glavina del Rio T."/>
            <person name="Dalin E."/>
            <person name="Tice H."/>
            <person name="Pitluck S."/>
            <person name="Sims D."/>
            <person name="Brettin T."/>
            <person name="Bruce D."/>
            <person name="Detter J.C."/>
            <person name="Han C."/>
            <person name="Schmutz J."/>
            <person name="Larimer F."/>
            <person name="Land M."/>
            <person name="Hauser L."/>
            <person name="Kyrpides N."/>
            <person name="Mikhailova N."/>
            <person name="Brettar I."/>
            <person name="Rodrigues J."/>
            <person name="Konstantinidis K."/>
            <person name="Tiedje J."/>
            <person name="Richardson P."/>
        </authorList>
    </citation>
    <scope>NUCLEOTIDE SEQUENCE [LARGE SCALE GENOMIC DNA]</scope>
    <source>
        <strain>OS185</strain>
    </source>
</reference>
<keyword id="KW-0028">Amino-acid biosynthesis</keyword>
<keyword id="KW-0057">Aromatic amino acid biosynthesis</keyword>
<keyword id="KW-0274">FAD</keyword>
<keyword id="KW-0285">Flavoprotein</keyword>
<keyword id="KW-0288">FMN</keyword>
<keyword id="KW-0456">Lyase</keyword>
<keyword id="KW-0521">NADP</keyword>